<reference key="1">
    <citation type="journal article" date="2000" name="Science">
        <title>Complete genome sequence of Neisseria meningitidis serogroup B strain MC58.</title>
        <authorList>
            <person name="Tettelin H."/>
            <person name="Saunders N.J."/>
            <person name="Heidelberg J.F."/>
            <person name="Jeffries A.C."/>
            <person name="Nelson K.E."/>
            <person name="Eisen J.A."/>
            <person name="Ketchum K.A."/>
            <person name="Hood D.W."/>
            <person name="Peden J.F."/>
            <person name="Dodson R.J."/>
            <person name="Nelson W.C."/>
            <person name="Gwinn M.L."/>
            <person name="DeBoy R.T."/>
            <person name="Peterson J.D."/>
            <person name="Hickey E.K."/>
            <person name="Haft D.H."/>
            <person name="Salzberg S.L."/>
            <person name="White O."/>
            <person name="Fleischmann R.D."/>
            <person name="Dougherty B.A."/>
            <person name="Mason T.M."/>
            <person name="Ciecko A."/>
            <person name="Parksey D.S."/>
            <person name="Blair E."/>
            <person name="Cittone H."/>
            <person name="Clark E.B."/>
            <person name="Cotton M.D."/>
            <person name="Utterback T.R."/>
            <person name="Khouri H.M."/>
            <person name="Qin H."/>
            <person name="Vamathevan J.J."/>
            <person name="Gill J."/>
            <person name="Scarlato V."/>
            <person name="Masignani V."/>
            <person name="Pizza M."/>
            <person name="Grandi G."/>
            <person name="Sun L."/>
            <person name="Smith H.O."/>
            <person name="Fraser C.M."/>
            <person name="Moxon E.R."/>
            <person name="Rappuoli R."/>
            <person name="Venter J.C."/>
        </authorList>
    </citation>
    <scope>NUCLEOTIDE SEQUENCE [LARGE SCALE GENOMIC DNA]</scope>
    <source>
        <strain>ATCC BAA-335 / MC58</strain>
    </source>
</reference>
<name>MINE_NEIMB</name>
<organism>
    <name type="scientific">Neisseria meningitidis serogroup B (strain ATCC BAA-335 / MC58)</name>
    <dbReference type="NCBI Taxonomy" id="122586"/>
    <lineage>
        <taxon>Bacteria</taxon>
        <taxon>Pseudomonadati</taxon>
        <taxon>Pseudomonadota</taxon>
        <taxon>Betaproteobacteria</taxon>
        <taxon>Neisseriales</taxon>
        <taxon>Neisseriaceae</taxon>
        <taxon>Neisseria</taxon>
    </lineage>
</organism>
<comment type="function">
    <text evidence="1">Prevents the cell division inhibition by proteins MinC and MinD at internal division sites while permitting inhibition at polar sites. This ensures cell division at the proper site by restricting the formation of a division septum at the midpoint of the long axis of the cell (By similarity).</text>
</comment>
<comment type="similarity">
    <text evidence="2">Belongs to the MinE family.</text>
</comment>
<dbReference type="EMBL" id="AE002098">
    <property type="protein sequence ID" value="AAF40629.1"/>
    <property type="molecule type" value="Genomic_DNA"/>
</dbReference>
<dbReference type="PIR" id="D81230">
    <property type="entry name" value="D81230"/>
</dbReference>
<dbReference type="RefSeq" id="NP_273230.1">
    <property type="nucleotide sequence ID" value="NC_003112.2"/>
</dbReference>
<dbReference type="RefSeq" id="WP_002215465.1">
    <property type="nucleotide sequence ID" value="NC_003112.2"/>
</dbReference>
<dbReference type="SMR" id="Q9K1H9"/>
<dbReference type="FunCoup" id="Q9K1H9">
    <property type="interactions" value="111"/>
</dbReference>
<dbReference type="STRING" id="122586.NMB0172"/>
<dbReference type="PaxDb" id="122586-NMB0172"/>
<dbReference type="GeneID" id="93387247"/>
<dbReference type="KEGG" id="nme:NMB0172"/>
<dbReference type="PATRIC" id="fig|122586.8.peg.213"/>
<dbReference type="HOGENOM" id="CLU_137929_2_1_4"/>
<dbReference type="InParanoid" id="Q9K1H9"/>
<dbReference type="OrthoDB" id="9802655at2"/>
<dbReference type="Proteomes" id="UP000000425">
    <property type="component" value="Chromosome"/>
</dbReference>
<dbReference type="GO" id="GO:0005886">
    <property type="term" value="C:plasma membrane"/>
    <property type="evidence" value="ECO:0000318"/>
    <property type="project" value="GO_Central"/>
</dbReference>
<dbReference type="GO" id="GO:0000918">
    <property type="term" value="P:division septum site selection"/>
    <property type="evidence" value="ECO:0000318"/>
    <property type="project" value="GO_Central"/>
</dbReference>
<dbReference type="GO" id="GO:0032955">
    <property type="term" value="P:regulation of division septum assembly"/>
    <property type="evidence" value="ECO:0007669"/>
    <property type="project" value="InterPro"/>
</dbReference>
<dbReference type="FunFam" id="3.30.1070.10:FF:000001">
    <property type="entry name" value="Cell division topological specificity factor"/>
    <property type="match status" value="1"/>
</dbReference>
<dbReference type="Gene3D" id="3.30.1070.10">
    <property type="entry name" value="Cell division topological specificity factor MinE"/>
    <property type="match status" value="1"/>
</dbReference>
<dbReference type="HAMAP" id="MF_00262">
    <property type="entry name" value="MinE"/>
    <property type="match status" value="1"/>
</dbReference>
<dbReference type="InterPro" id="IPR005527">
    <property type="entry name" value="MinE"/>
</dbReference>
<dbReference type="InterPro" id="IPR036707">
    <property type="entry name" value="MinE_sf"/>
</dbReference>
<dbReference type="NCBIfam" id="TIGR01215">
    <property type="entry name" value="minE"/>
    <property type="match status" value="1"/>
</dbReference>
<dbReference type="NCBIfam" id="NF001422">
    <property type="entry name" value="PRK00296.1"/>
    <property type="match status" value="1"/>
</dbReference>
<dbReference type="NCBIfam" id="NF010595">
    <property type="entry name" value="PRK13989.1"/>
    <property type="match status" value="1"/>
</dbReference>
<dbReference type="Pfam" id="PF03776">
    <property type="entry name" value="MinE"/>
    <property type="match status" value="1"/>
</dbReference>
<dbReference type="SUPFAM" id="SSF55229">
    <property type="entry name" value="Cell division protein MinE topological specificity domain"/>
    <property type="match status" value="1"/>
</dbReference>
<gene>
    <name type="primary">minE</name>
    <name type="ordered locus">NMB0172</name>
</gene>
<accession>Q9K1H9</accession>
<protein>
    <recommendedName>
        <fullName>Cell division topological specificity factor</fullName>
    </recommendedName>
</protein>
<proteinExistence type="inferred from homology"/>
<evidence type="ECO:0000250" key="1"/>
<evidence type="ECO:0000305" key="2"/>
<sequence>MSLIEFLFGRKQKTATVARDRLQIIIAQERAQEGQAPDYLPTLRKELMEVLSKYVNVSLDNIRISQEKQDGMDVLELNITLPEQKKV</sequence>
<feature type="chain" id="PRO_0000205881" description="Cell division topological specificity factor">
    <location>
        <begin position="1"/>
        <end position="87"/>
    </location>
</feature>
<keyword id="KW-0131">Cell cycle</keyword>
<keyword id="KW-0132">Cell division</keyword>
<keyword id="KW-1185">Reference proteome</keyword>